<dbReference type="EMBL" id="AM446364">
    <property type="protein sequence ID" value="CAN67522.1"/>
    <property type="molecule type" value="Genomic_DNA"/>
</dbReference>
<dbReference type="RefSeq" id="XP_002283142.1">
    <property type="nucleotide sequence ID" value="XM_002283106.4"/>
</dbReference>
<dbReference type="SMR" id="A5B4K1"/>
<dbReference type="PaxDb" id="29760-VIT_05s0020g03900.t01"/>
<dbReference type="EnsemblPlants" id="Vitvi05g00543_t001">
    <property type="protein sequence ID" value="Vitvi05g00543_P001"/>
    <property type="gene ID" value="Vitvi05g00543"/>
</dbReference>
<dbReference type="Gramene" id="Vitvi05g00543_t001">
    <property type="protein sequence ID" value="Vitvi05g00543_P001"/>
    <property type="gene ID" value="Vitvi05g00543"/>
</dbReference>
<dbReference type="eggNOG" id="KOG1628">
    <property type="taxonomic scope" value="Eukaryota"/>
</dbReference>
<dbReference type="HOGENOM" id="CLU_062507_0_0_1"/>
<dbReference type="OMA" id="IEKACQP"/>
<dbReference type="OrthoDB" id="9834376at2759"/>
<dbReference type="ExpressionAtlas" id="A5B4K1">
    <property type="expression patterns" value="baseline and differential"/>
</dbReference>
<dbReference type="GO" id="GO:0022627">
    <property type="term" value="C:cytosolic small ribosomal subunit"/>
    <property type="evidence" value="ECO:0007669"/>
    <property type="project" value="UniProtKB-UniRule"/>
</dbReference>
<dbReference type="GO" id="GO:0003735">
    <property type="term" value="F:structural constituent of ribosome"/>
    <property type="evidence" value="ECO:0007669"/>
    <property type="project" value="UniProtKB-UniRule"/>
</dbReference>
<dbReference type="GO" id="GO:0006412">
    <property type="term" value="P:translation"/>
    <property type="evidence" value="ECO:0007669"/>
    <property type="project" value="UniProtKB-UniRule"/>
</dbReference>
<dbReference type="HAMAP" id="MF_03122">
    <property type="entry name" value="Ribosomal_eS1_euk"/>
    <property type="match status" value="1"/>
</dbReference>
<dbReference type="InterPro" id="IPR001593">
    <property type="entry name" value="Ribosomal_eS1"/>
</dbReference>
<dbReference type="InterPro" id="IPR018281">
    <property type="entry name" value="Ribosomal_eS1_CS"/>
</dbReference>
<dbReference type="InterPro" id="IPR027500">
    <property type="entry name" value="Ribosomal_eS1_euk"/>
</dbReference>
<dbReference type="PANTHER" id="PTHR11830">
    <property type="entry name" value="40S RIBOSOMAL PROTEIN S3A"/>
    <property type="match status" value="1"/>
</dbReference>
<dbReference type="Pfam" id="PF01015">
    <property type="entry name" value="Ribosomal_S3Ae"/>
    <property type="match status" value="1"/>
</dbReference>
<dbReference type="SMART" id="SM01397">
    <property type="entry name" value="Ribosomal_S3Ae"/>
    <property type="match status" value="1"/>
</dbReference>
<dbReference type="PROSITE" id="PS01191">
    <property type="entry name" value="RIBOSOMAL_S3AE"/>
    <property type="match status" value="1"/>
</dbReference>
<reference key="1">
    <citation type="journal article" date="2007" name="Nature">
        <title>The grapevine genome sequence suggests ancestral hexaploidization in major angiosperm phyla.</title>
        <authorList>
            <person name="Jaillon O."/>
            <person name="Aury J.-M."/>
            <person name="Noel B."/>
            <person name="Policriti A."/>
            <person name="Clepet C."/>
            <person name="Casagrande A."/>
            <person name="Choisne N."/>
            <person name="Aubourg S."/>
            <person name="Vitulo N."/>
            <person name="Jubin C."/>
            <person name="Vezzi A."/>
            <person name="Legeai F."/>
            <person name="Hugueney P."/>
            <person name="Dasilva C."/>
            <person name="Horner D."/>
            <person name="Mica E."/>
            <person name="Jublot D."/>
            <person name="Poulain J."/>
            <person name="Bruyere C."/>
            <person name="Billault A."/>
            <person name="Segurens B."/>
            <person name="Gouyvenoux M."/>
            <person name="Ugarte E."/>
            <person name="Cattonaro F."/>
            <person name="Anthouard V."/>
            <person name="Vico V."/>
            <person name="Del Fabbro C."/>
            <person name="Alaux M."/>
            <person name="Di Gaspero G."/>
            <person name="Dumas V."/>
            <person name="Felice N."/>
            <person name="Paillard S."/>
            <person name="Juman I."/>
            <person name="Moroldo M."/>
            <person name="Scalabrin S."/>
            <person name="Canaguier A."/>
            <person name="Le Clainche I."/>
            <person name="Malacrida G."/>
            <person name="Durand E."/>
            <person name="Pesole G."/>
            <person name="Laucou V."/>
            <person name="Chatelet P."/>
            <person name="Merdinoglu D."/>
            <person name="Delledonne M."/>
            <person name="Pezzotti M."/>
            <person name="Lecharny A."/>
            <person name="Scarpelli C."/>
            <person name="Artiguenave F."/>
            <person name="Pe M.E."/>
            <person name="Valle G."/>
            <person name="Morgante M."/>
            <person name="Caboche M."/>
            <person name="Adam-Blondon A.-F."/>
            <person name="Weissenbach J."/>
            <person name="Quetier F."/>
            <person name="Wincker P."/>
        </authorList>
    </citation>
    <scope>NUCLEOTIDE SEQUENCE [LARGE SCALE GENOMIC DNA]</scope>
    <source>
        <strain>cv. Pinot noir / PN40024</strain>
    </source>
</reference>
<reference key="2">
    <citation type="journal article" date="2007" name="PLoS ONE">
        <title>A high quality draft consensus sequence of the genome of a heterozygous grapevine variety.</title>
        <authorList>
            <person name="Velasco R."/>
            <person name="Zharkikh A."/>
            <person name="Troggio M."/>
            <person name="Cartwright D.A."/>
            <person name="Cestaro A."/>
            <person name="Pruss D."/>
            <person name="Pindo M."/>
            <person name="FitzGerald L.M."/>
            <person name="Vezzulli S."/>
            <person name="Reid J."/>
            <person name="Malacarne G."/>
            <person name="Iliev D."/>
            <person name="Coppola G."/>
            <person name="Wardell B."/>
            <person name="Micheletti D."/>
            <person name="Macalma T."/>
            <person name="Facci M."/>
            <person name="Mitchell J.T."/>
            <person name="Perazzolli M."/>
            <person name="Eldredge G."/>
            <person name="Gatto P."/>
            <person name="Oyzerski R."/>
            <person name="Moretto M."/>
            <person name="Gutin N."/>
            <person name="Stefanini M."/>
            <person name="Chen Y."/>
            <person name="Segala C."/>
            <person name="Davenport C."/>
            <person name="Dematte L."/>
            <person name="Mraz A."/>
            <person name="Battilana J."/>
            <person name="Stormo K."/>
            <person name="Costa F."/>
            <person name="Tao Q."/>
            <person name="Si-Ammour A."/>
            <person name="Harkins T."/>
            <person name="Lackey A."/>
            <person name="Perbost C."/>
            <person name="Taillon B."/>
            <person name="Stella A."/>
            <person name="Solovyev V."/>
            <person name="Fawcett J.A."/>
            <person name="Sterck L."/>
            <person name="Vandepoele K."/>
            <person name="Grando S.M."/>
            <person name="Toppo S."/>
            <person name="Moser C."/>
            <person name="Lanchbury J."/>
            <person name="Bogden R."/>
            <person name="Skolnick M."/>
            <person name="Sgaramella V."/>
            <person name="Bhatnagar S.K."/>
            <person name="Fontana P."/>
            <person name="Gutin A."/>
            <person name="Van de Peer Y."/>
            <person name="Salamini F."/>
            <person name="Viola R."/>
        </authorList>
    </citation>
    <scope>NUCLEOTIDE SEQUENCE [LARGE SCALE GENOMIC DNA]</scope>
    <source>
        <strain>cv. Pinot noir</strain>
    </source>
</reference>
<evidence type="ECO:0000255" key="1">
    <source>
        <dbReference type="HAMAP-Rule" id="MF_03122"/>
    </source>
</evidence>
<evidence type="ECO:0000256" key="2">
    <source>
        <dbReference type="SAM" id="MobiDB-lite"/>
    </source>
</evidence>
<evidence type="ECO:0000305" key="3"/>
<accession>A5B4K1</accession>
<accession>A7NWS5</accession>
<sequence>MAVGKNKRISKGKKGGKKKAADPFAKKDWYDIKAPSVFEVRNVGKTLVSRTQGTKIASEGLKHRVFEISLADLQADEDQAYRKIRLRAEDVQGRNVLTNFWGMDFTTDKLRSLVRKWQTLIEAHVDVKTTDNYTLRLFCIAFTKKRVNQNKKTCYAQSSQIRQIRRKMREIMTNMATSCDLKELVKKFIPESIGREIEKATSSIYPLQNVYIRKVKILKAPKFDLGKLMEVHGDYSEDVGTKLERPADEPVAEGVTEVIGA</sequence>
<organism>
    <name type="scientific">Vitis vinifera</name>
    <name type="common">Grape</name>
    <dbReference type="NCBI Taxonomy" id="29760"/>
    <lineage>
        <taxon>Eukaryota</taxon>
        <taxon>Viridiplantae</taxon>
        <taxon>Streptophyta</taxon>
        <taxon>Embryophyta</taxon>
        <taxon>Tracheophyta</taxon>
        <taxon>Spermatophyta</taxon>
        <taxon>Magnoliopsida</taxon>
        <taxon>eudicotyledons</taxon>
        <taxon>Gunneridae</taxon>
        <taxon>Pentapetalae</taxon>
        <taxon>rosids</taxon>
        <taxon>Vitales</taxon>
        <taxon>Vitaceae</taxon>
        <taxon>Viteae</taxon>
        <taxon>Vitis</taxon>
    </lineage>
</organism>
<comment type="subunit">
    <text evidence="1">Component of the small ribosomal subunit. Mature ribosomes consist of a small (40S) and a large (60S) subunit. The 40S subunit contains about 33 different proteins and 1 molecule of RNA (18S). The 60S subunit contains about 49 different proteins and 3 molecules of RNA (25S, 5.8S and 5S).</text>
</comment>
<comment type="subcellular location">
    <subcellularLocation>
        <location evidence="1">Cytoplasm</location>
    </subcellularLocation>
</comment>
<comment type="similarity">
    <text evidence="1">Belongs to the eukaryotic ribosomal protein eS1 family.</text>
</comment>
<gene>
    <name type="ORF">GSVIVT00020038001</name>
    <name type="ORF">LOC100249434</name>
    <name type="ORF">VITISV_020206</name>
</gene>
<protein>
    <recommendedName>
        <fullName evidence="1">Small ribosomal subunit protein eS1z</fullName>
    </recommendedName>
    <alternativeName>
        <fullName evidence="3">40S ribosomal protein S3a-1</fullName>
    </alternativeName>
</protein>
<feature type="initiator methionine" description="Removed" evidence="1">
    <location>
        <position position="1"/>
    </location>
</feature>
<feature type="chain" id="PRO_0000389332" description="Small ribosomal subunit protein eS1z">
    <location>
        <begin position="2"/>
        <end position="261"/>
    </location>
</feature>
<feature type="region of interest" description="Disordered" evidence="2">
    <location>
        <begin position="1"/>
        <end position="20"/>
    </location>
</feature>
<feature type="compositionally biased region" description="Basic residues" evidence="2">
    <location>
        <begin position="1"/>
        <end position="18"/>
    </location>
</feature>
<name>RS3A1_VITVI</name>
<proteinExistence type="inferred from homology"/>
<keyword id="KW-0963">Cytoplasm</keyword>
<keyword id="KW-0687">Ribonucleoprotein</keyword>
<keyword id="KW-0689">Ribosomal protein</keyword>